<proteinExistence type="inferred from homology"/>
<name>Y2658_RUEST</name>
<organism>
    <name type="scientific">Ruegeria sp. (strain TM1040)</name>
    <name type="common">Silicibacter sp.</name>
    <dbReference type="NCBI Taxonomy" id="292414"/>
    <lineage>
        <taxon>Bacteria</taxon>
        <taxon>Pseudomonadati</taxon>
        <taxon>Pseudomonadota</taxon>
        <taxon>Alphaproteobacteria</taxon>
        <taxon>Rhodobacterales</taxon>
        <taxon>Roseobacteraceae</taxon>
        <taxon>Ruegeria</taxon>
    </lineage>
</organism>
<feature type="chain" id="PRO_0000262064" description="UPF0246 protein TM1040_2658">
    <location>
        <begin position="1"/>
        <end position="251"/>
    </location>
</feature>
<dbReference type="EMBL" id="CP000377">
    <property type="protein sequence ID" value="ABF65390.1"/>
    <property type="molecule type" value="Genomic_DNA"/>
</dbReference>
<dbReference type="RefSeq" id="WP_011539972.1">
    <property type="nucleotide sequence ID" value="NC_008044.1"/>
</dbReference>
<dbReference type="SMR" id="Q1GD76"/>
<dbReference type="STRING" id="292414.TM1040_2658"/>
<dbReference type="KEGG" id="sit:TM1040_2658"/>
<dbReference type="eggNOG" id="COG3022">
    <property type="taxonomic scope" value="Bacteria"/>
</dbReference>
<dbReference type="HOGENOM" id="CLU_061989_0_0_5"/>
<dbReference type="OrthoDB" id="9777133at2"/>
<dbReference type="Proteomes" id="UP000000636">
    <property type="component" value="Chromosome"/>
</dbReference>
<dbReference type="GO" id="GO:0005829">
    <property type="term" value="C:cytosol"/>
    <property type="evidence" value="ECO:0007669"/>
    <property type="project" value="TreeGrafter"/>
</dbReference>
<dbReference type="GO" id="GO:0033194">
    <property type="term" value="P:response to hydroperoxide"/>
    <property type="evidence" value="ECO:0007669"/>
    <property type="project" value="TreeGrafter"/>
</dbReference>
<dbReference type="HAMAP" id="MF_00652">
    <property type="entry name" value="UPF0246"/>
    <property type="match status" value="1"/>
</dbReference>
<dbReference type="InterPro" id="IPR005583">
    <property type="entry name" value="YaaA"/>
</dbReference>
<dbReference type="PANTHER" id="PTHR30283:SF4">
    <property type="entry name" value="PEROXIDE STRESS RESISTANCE PROTEIN YAAA"/>
    <property type="match status" value="1"/>
</dbReference>
<dbReference type="PANTHER" id="PTHR30283">
    <property type="entry name" value="PEROXIDE STRESS RESPONSE PROTEIN YAAA"/>
    <property type="match status" value="1"/>
</dbReference>
<dbReference type="Pfam" id="PF03883">
    <property type="entry name" value="H2O2_YaaD"/>
    <property type="match status" value="1"/>
</dbReference>
<keyword id="KW-1185">Reference proteome</keyword>
<reference key="1">
    <citation type="submission" date="2006-05" db="EMBL/GenBank/DDBJ databases">
        <title>Complete sequence of chromosome of Silicibacter sp. TM1040.</title>
        <authorList>
            <consortium name="US DOE Joint Genome Institute"/>
            <person name="Copeland A."/>
            <person name="Lucas S."/>
            <person name="Lapidus A."/>
            <person name="Barry K."/>
            <person name="Detter J.C."/>
            <person name="Glavina del Rio T."/>
            <person name="Hammon N."/>
            <person name="Israni S."/>
            <person name="Dalin E."/>
            <person name="Tice H."/>
            <person name="Pitluck S."/>
            <person name="Brettin T."/>
            <person name="Bruce D."/>
            <person name="Han C."/>
            <person name="Tapia R."/>
            <person name="Goodwin L."/>
            <person name="Thompson L.S."/>
            <person name="Gilna P."/>
            <person name="Schmutz J."/>
            <person name="Larimer F."/>
            <person name="Land M."/>
            <person name="Hauser L."/>
            <person name="Kyrpides N."/>
            <person name="Kim E."/>
            <person name="Belas R."/>
            <person name="Moran M.A."/>
            <person name="Buchan A."/>
            <person name="Gonzalez J.M."/>
            <person name="Schell M.A."/>
            <person name="Sun F."/>
            <person name="Richardson P."/>
        </authorList>
    </citation>
    <scope>NUCLEOTIDE SEQUENCE [LARGE SCALE GENOMIC DNA]</scope>
    <source>
        <strain>TM1040</strain>
    </source>
</reference>
<protein>
    <recommendedName>
        <fullName evidence="1">UPF0246 protein TM1040_2658</fullName>
    </recommendedName>
</protein>
<comment type="similarity">
    <text evidence="1">Belongs to the UPF0246 family.</text>
</comment>
<sequence>MIILVSPAKKLNEERARGQATTVPRFLDQAAELAGVARTWSEDEIAKLMGISATLAKLNKDRFAAWSGDGQCAAGLMFDGDVYKELEPATFDDVTKDAAQRRLRILSGLYGLLRPTDAIEAYRLEMGRKTPGHPAGTLYGFWGDKIAAAIVEEARELGVGSVLNLASEEYAKAVPPKALGDLTLISPRFEEERGGSRKVIGVAAKRARGAMARWVLENGITEADDLKGFTVGGYAFDAETSAPQRPIFVRG</sequence>
<gene>
    <name type="ordered locus">TM1040_2658</name>
</gene>
<accession>Q1GD76</accession>
<evidence type="ECO:0000255" key="1">
    <source>
        <dbReference type="HAMAP-Rule" id="MF_00652"/>
    </source>
</evidence>